<accession>B4TXF6</accession>
<comment type="similarity">
    <text evidence="1">Belongs to the SlyX family.</text>
</comment>
<protein>
    <recommendedName>
        <fullName evidence="1">Protein SlyX</fullName>
    </recommendedName>
</protein>
<dbReference type="EMBL" id="CP001127">
    <property type="protein sequence ID" value="ACF90817.1"/>
    <property type="molecule type" value="Genomic_DNA"/>
</dbReference>
<dbReference type="RefSeq" id="WP_001152701.1">
    <property type="nucleotide sequence ID" value="NC_011094.1"/>
</dbReference>
<dbReference type="SMR" id="B4TXF6"/>
<dbReference type="KEGG" id="sew:SeSA_A3650"/>
<dbReference type="HOGENOM" id="CLU_180796_4_2_6"/>
<dbReference type="Proteomes" id="UP000001865">
    <property type="component" value="Chromosome"/>
</dbReference>
<dbReference type="Gene3D" id="1.20.5.300">
    <property type="match status" value="1"/>
</dbReference>
<dbReference type="HAMAP" id="MF_00715">
    <property type="entry name" value="SlyX"/>
    <property type="match status" value="1"/>
</dbReference>
<dbReference type="InterPro" id="IPR007236">
    <property type="entry name" value="SlyX"/>
</dbReference>
<dbReference type="NCBIfam" id="NF002750">
    <property type="entry name" value="PRK02793.1"/>
    <property type="match status" value="1"/>
</dbReference>
<dbReference type="PANTHER" id="PTHR36508">
    <property type="entry name" value="PROTEIN SLYX"/>
    <property type="match status" value="1"/>
</dbReference>
<dbReference type="PANTHER" id="PTHR36508:SF1">
    <property type="entry name" value="PROTEIN SLYX"/>
    <property type="match status" value="1"/>
</dbReference>
<dbReference type="Pfam" id="PF04102">
    <property type="entry name" value="SlyX"/>
    <property type="match status" value="1"/>
</dbReference>
<name>SLYX_SALSV</name>
<organism>
    <name type="scientific">Salmonella schwarzengrund (strain CVM19633)</name>
    <dbReference type="NCBI Taxonomy" id="439843"/>
    <lineage>
        <taxon>Bacteria</taxon>
        <taxon>Pseudomonadati</taxon>
        <taxon>Pseudomonadota</taxon>
        <taxon>Gammaproteobacteria</taxon>
        <taxon>Enterobacterales</taxon>
        <taxon>Enterobacteriaceae</taxon>
        <taxon>Salmonella</taxon>
    </lineage>
</organism>
<gene>
    <name evidence="1" type="primary">slyX</name>
    <name type="ordered locus">SeSA_A3650</name>
</gene>
<feature type="chain" id="PRO_1000195855" description="Protein SlyX">
    <location>
        <begin position="1"/>
        <end position="72"/>
    </location>
</feature>
<feature type="region of interest" description="Disordered" evidence="2">
    <location>
        <begin position="53"/>
        <end position="72"/>
    </location>
</feature>
<feature type="compositionally biased region" description="Polar residues" evidence="2">
    <location>
        <begin position="55"/>
        <end position="65"/>
    </location>
</feature>
<proteinExistence type="inferred from homology"/>
<sequence length="72" mass="8260">MQDITMEARLAELESRLAFQEITIEELNLTVTAHEMEMAKLRDHLRLLTEKLKASQPSNIASQAEETPPPHY</sequence>
<evidence type="ECO:0000255" key="1">
    <source>
        <dbReference type="HAMAP-Rule" id="MF_00715"/>
    </source>
</evidence>
<evidence type="ECO:0000256" key="2">
    <source>
        <dbReference type="SAM" id="MobiDB-lite"/>
    </source>
</evidence>
<reference key="1">
    <citation type="journal article" date="2011" name="J. Bacteriol.">
        <title>Comparative genomics of 28 Salmonella enterica isolates: evidence for CRISPR-mediated adaptive sublineage evolution.</title>
        <authorList>
            <person name="Fricke W.F."/>
            <person name="Mammel M.K."/>
            <person name="McDermott P.F."/>
            <person name="Tartera C."/>
            <person name="White D.G."/>
            <person name="Leclerc J.E."/>
            <person name="Ravel J."/>
            <person name="Cebula T.A."/>
        </authorList>
    </citation>
    <scope>NUCLEOTIDE SEQUENCE [LARGE SCALE GENOMIC DNA]</scope>
    <source>
        <strain>CVM19633</strain>
    </source>
</reference>